<reference key="1">
    <citation type="journal article" date="2007" name="Nature">
        <title>Evolution of genes and genomes on the Drosophila phylogeny.</title>
        <authorList>
            <consortium name="Drosophila 12 genomes consortium"/>
        </authorList>
    </citation>
    <scope>NUCLEOTIDE SEQUENCE [LARGE SCALE GENOMIC DNA]</scope>
    <source>
        <strain>Tucson 14024-0371.13</strain>
    </source>
</reference>
<feature type="transit peptide" description="Mitochondrion" evidence="1">
    <location>
        <begin position="1"/>
        <end position="10"/>
    </location>
</feature>
<feature type="chain" id="PRO_0000413301" description="Glutamyl-tRNA(Gln) amidotransferase subunit C, mitochondrial">
    <location>
        <begin position="11"/>
        <end position="148"/>
    </location>
</feature>
<organism>
    <name type="scientific">Drosophila ananassae</name>
    <name type="common">Fruit fly</name>
    <dbReference type="NCBI Taxonomy" id="7217"/>
    <lineage>
        <taxon>Eukaryota</taxon>
        <taxon>Metazoa</taxon>
        <taxon>Ecdysozoa</taxon>
        <taxon>Arthropoda</taxon>
        <taxon>Hexapoda</taxon>
        <taxon>Insecta</taxon>
        <taxon>Pterygota</taxon>
        <taxon>Neoptera</taxon>
        <taxon>Endopterygota</taxon>
        <taxon>Diptera</taxon>
        <taxon>Brachycera</taxon>
        <taxon>Muscomorpha</taxon>
        <taxon>Ephydroidea</taxon>
        <taxon>Drosophilidae</taxon>
        <taxon>Drosophila</taxon>
        <taxon>Sophophora</taxon>
    </lineage>
</organism>
<dbReference type="EC" id="6.3.5.-" evidence="1"/>
<dbReference type="EMBL" id="CH902620">
    <property type="protein sequence ID" value="EDV32000.1"/>
    <property type="molecule type" value="Genomic_DNA"/>
</dbReference>
<dbReference type="SMR" id="B3MN22"/>
<dbReference type="FunCoup" id="B3MN22">
    <property type="interactions" value="1117"/>
</dbReference>
<dbReference type="STRING" id="7217.B3MN22"/>
<dbReference type="EnsemblMetazoa" id="FBtr0124421">
    <property type="protein sequence ID" value="FBpp0122913"/>
    <property type="gene ID" value="FBgn0096728"/>
</dbReference>
<dbReference type="EnsemblMetazoa" id="XM_001962743.4">
    <property type="protein sequence ID" value="XP_001962779.1"/>
    <property type="gene ID" value="LOC6502469"/>
</dbReference>
<dbReference type="GeneID" id="6502469"/>
<dbReference type="KEGG" id="dan:6502469"/>
<dbReference type="CTD" id="283459"/>
<dbReference type="eggNOG" id="KOG4247">
    <property type="taxonomic scope" value="Eukaryota"/>
</dbReference>
<dbReference type="HOGENOM" id="CLU_105899_0_1_1"/>
<dbReference type="InParanoid" id="B3MN22"/>
<dbReference type="OMA" id="RCAKRTD"/>
<dbReference type="OrthoDB" id="5394539at2759"/>
<dbReference type="PhylomeDB" id="B3MN22"/>
<dbReference type="Proteomes" id="UP000007801">
    <property type="component" value="Unassembled WGS sequence"/>
</dbReference>
<dbReference type="GO" id="GO:0030956">
    <property type="term" value="C:glutamyl-tRNA(Gln) amidotransferase complex"/>
    <property type="evidence" value="ECO:0007669"/>
    <property type="project" value="UniProtKB-UniRule"/>
</dbReference>
<dbReference type="GO" id="GO:0005739">
    <property type="term" value="C:mitochondrion"/>
    <property type="evidence" value="ECO:0007669"/>
    <property type="project" value="UniProtKB-SubCell"/>
</dbReference>
<dbReference type="GO" id="GO:0005524">
    <property type="term" value="F:ATP binding"/>
    <property type="evidence" value="ECO:0007669"/>
    <property type="project" value="UniProtKB-KW"/>
</dbReference>
<dbReference type="GO" id="GO:0050567">
    <property type="term" value="F:glutaminyl-tRNA synthase (glutamine-hydrolyzing) activity"/>
    <property type="evidence" value="ECO:0007669"/>
    <property type="project" value="UniProtKB-UniRule"/>
</dbReference>
<dbReference type="GO" id="GO:0070681">
    <property type="term" value="P:glutaminyl-tRNAGln biosynthesis via transamidation"/>
    <property type="evidence" value="ECO:0007669"/>
    <property type="project" value="UniProtKB-UniRule"/>
</dbReference>
<dbReference type="GO" id="GO:0032543">
    <property type="term" value="P:mitochondrial translation"/>
    <property type="evidence" value="ECO:0007669"/>
    <property type="project" value="UniProtKB-UniRule"/>
</dbReference>
<dbReference type="GO" id="GO:0006450">
    <property type="term" value="P:regulation of translational fidelity"/>
    <property type="evidence" value="ECO:0007669"/>
    <property type="project" value="InterPro"/>
</dbReference>
<dbReference type="HAMAP" id="MF_00122">
    <property type="entry name" value="GatC"/>
    <property type="match status" value="1"/>
</dbReference>
<dbReference type="InterPro" id="IPR036113">
    <property type="entry name" value="Asp/Glu-ADT_sf_sub_c"/>
</dbReference>
<dbReference type="InterPro" id="IPR003837">
    <property type="entry name" value="GatC"/>
</dbReference>
<dbReference type="NCBIfam" id="TIGR00135">
    <property type="entry name" value="gatC"/>
    <property type="match status" value="1"/>
</dbReference>
<dbReference type="PANTHER" id="PTHR15004">
    <property type="entry name" value="GLUTAMYL-TRNA(GLN) AMIDOTRANSFERASE SUBUNIT C, MITOCHONDRIAL"/>
    <property type="match status" value="1"/>
</dbReference>
<dbReference type="PANTHER" id="PTHR15004:SF0">
    <property type="entry name" value="GLUTAMYL-TRNA(GLN) AMIDOTRANSFERASE SUBUNIT C, MITOCHONDRIAL"/>
    <property type="match status" value="1"/>
</dbReference>
<dbReference type="Pfam" id="PF02686">
    <property type="entry name" value="GatC"/>
    <property type="match status" value="1"/>
</dbReference>
<dbReference type="SUPFAM" id="SSF141000">
    <property type="entry name" value="Glu-tRNAGln amidotransferase C subunit"/>
    <property type="match status" value="1"/>
</dbReference>
<keyword id="KW-0067">ATP-binding</keyword>
<keyword id="KW-0436">Ligase</keyword>
<keyword id="KW-0496">Mitochondrion</keyword>
<keyword id="KW-0547">Nucleotide-binding</keyword>
<keyword id="KW-0648">Protein biosynthesis</keyword>
<keyword id="KW-1185">Reference proteome</keyword>
<keyword id="KW-0809">Transit peptide</keyword>
<evidence type="ECO:0000255" key="1">
    <source>
        <dbReference type="HAMAP-Rule" id="MF_03149"/>
    </source>
</evidence>
<comment type="function">
    <text evidence="1">Allows the formation of correctly charged Gln-tRNA(Gln) through the transamidation of misacylated Glu-tRNA(Gln) in the mitochondria. The reaction takes place in the presence of glutamine and ATP through an activated gamma-phospho-Glu-tRNA(Gln).</text>
</comment>
<comment type="catalytic activity">
    <reaction evidence="1">
        <text>L-glutamyl-tRNA(Gln) + L-glutamine + ATP + H2O = L-glutaminyl-tRNA(Gln) + L-glutamate + ADP + phosphate + H(+)</text>
        <dbReference type="Rhea" id="RHEA:17521"/>
        <dbReference type="Rhea" id="RHEA-COMP:9681"/>
        <dbReference type="Rhea" id="RHEA-COMP:9684"/>
        <dbReference type="ChEBI" id="CHEBI:15377"/>
        <dbReference type="ChEBI" id="CHEBI:15378"/>
        <dbReference type="ChEBI" id="CHEBI:29985"/>
        <dbReference type="ChEBI" id="CHEBI:30616"/>
        <dbReference type="ChEBI" id="CHEBI:43474"/>
        <dbReference type="ChEBI" id="CHEBI:58359"/>
        <dbReference type="ChEBI" id="CHEBI:78520"/>
        <dbReference type="ChEBI" id="CHEBI:78521"/>
        <dbReference type="ChEBI" id="CHEBI:456216"/>
    </reaction>
</comment>
<comment type="subunit">
    <text evidence="1">Subunit of the heterotrimeric GatCAB amidotransferase (AdT) complex, composed of A, B and C subunits.</text>
</comment>
<comment type="subcellular location">
    <subcellularLocation>
        <location evidence="1">Mitochondrion</location>
    </subcellularLocation>
</comment>
<comment type="similarity">
    <text evidence="1">Belongs to the GatC family.</text>
</comment>
<gene>
    <name type="ORF">GF19721</name>
</gene>
<protein>
    <recommendedName>
        <fullName evidence="1">Glutamyl-tRNA(Gln) amidotransferase subunit C, mitochondrial</fullName>
        <shortName evidence="1">Glu-AdT subunit C</shortName>
        <ecNumber evidence="1">6.3.5.-</ecNumber>
    </recommendedName>
</protein>
<proteinExistence type="inferred from homology"/>
<accession>B3MN22</accession>
<sequence length="148" mass="16906">MLRLLNKRFYCKFATKTKVRPEKLNFKQLTHPTKVPQTPVKAAFPNTSANEIELDPKSIQLLERLALVDLDSERALETLKSSIQFADKITHIQTDNVRPLYTVLEQQQLQLRNDLVTEGDCRGKVLSNAKVTDEDYFVSPPGNIPLEQ</sequence>
<name>GATC_DROAN</name>